<name>PUR7_CAMJ8</name>
<keyword id="KW-0067">ATP-binding</keyword>
<keyword id="KW-0436">Ligase</keyword>
<keyword id="KW-0547">Nucleotide-binding</keyword>
<keyword id="KW-0658">Purine biosynthesis</keyword>
<comment type="catalytic activity">
    <reaction evidence="1">
        <text>5-amino-1-(5-phospho-D-ribosyl)imidazole-4-carboxylate + L-aspartate + ATP = (2S)-2-[5-amino-1-(5-phospho-beta-D-ribosyl)imidazole-4-carboxamido]succinate + ADP + phosphate + 2 H(+)</text>
        <dbReference type="Rhea" id="RHEA:22628"/>
        <dbReference type="ChEBI" id="CHEBI:15378"/>
        <dbReference type="ChEBI" id="CHEBI:29991"/>
        <dbReference type="ChEBI" id="CHEBI:30616"/>
        <dbReference type="ChEBI" id="CHEBI:43474"/>
        <dbReference type="ChEBI" id="CHEBI:58443"/>
        <dbReference type="ChEBI" id="CHEBI:77657"/>
        <dbReference type="ChEBI" id="CHEBI:456216"/>
        <dbReference type="EC" id="6.3.2.6"/>
    </reaction>
</comment>
<comment type="pathway">
    <text evidence="1">Purine metabolism; IMP biosynthesis via de novo pathway; 5-amino-1-(5-phospho-D-ribosyl)imidazole-4-carboxamide from 5-amino-1-(5-phospho-D-ribosyl)imidazole-4-carboxylate: step 1/2.</text>
</comment>
<comment type="similarity">
    <text evidence="1">Belongs to the SAICAR synthetase family.</text>
</comment>
<feature type="chain" id="PRO_1000071445" description="Phosphoribosylaminoimidazole-succinocarboxamide synthase">
    <location>
        <begin position="1"/>
        <end position="236"/>
    </location>
</feature>
<protein>
    <recommendedName>
        <fullName evidence="1">Phosphoribosylaminoimidazole-succinocarboxamide synthase</fullName>
        <ecNumber evidence="1">6.3.2.6</ecNumber>
    </recommendedName>
    <alternativeName>
        <fullName evidence="1">SAICAR synthetase</fullName>
    </alternativeName>
</protein>
<organism>
    <name type="scientific">Campylobacter jejuni subsp. jejuni serotype O:6 (strain 81116 / NCTC 11828)</name>
    <dbReference type="NCBI Taxonomy" id="407148"/>
    <lineage>
        <taxon>Bacteria</taxon>
        <taxon>Pseudomonadati</taxon>
        <taxon>Campylobacterota</taxon>
        <taxon>Epsilonproteobacteria</taxon>
        <taxon>Campylobacterales</taxon>
        <taxon>Campylobacteraceae</taxon>
        <taxon>Campylobacter</taxon>
    </lineage>
</organism>
<gene>
    <name evidence="1" type="primary">purC</name>
    <name type="ordered locus">C8J_0476</name>
</gene>
<reference key="1">
    <citation type="journal article" date="2007" name="J. Bacteriol.">
        <title>The complete genome sequence of Campylobacter jejuni strain 81116 (NCTC11828).</title>
        <authorList>
            <person name="Pearson B.M."/>
            <person name="Gaskin D.J.H."/>
            <person name="Segers R.P.A.M."/>
            <person name="Wells J.M."/>
            <person name="Nuijten P.J.M."/>
            <person name="van Vliet A.H.M."/>
        </authorList>
    </citation>
    <scope>NUCLEOTIDE SEQUENCE [LARGE SCALE GENOMIC DNA]</scope>
    <source>
        <strain>81116 / NCTC 11828</strain>
    </source>
</reference>
<proteinExistence type="inferred from homology"/>
<accession>A8FKT8</accession>
<evidence type="ECO:0000255" key="1">
    <source>
        <dbReference type="HAMAP-Rule" id="MF_00137"/>
    </source>
</evidence>
<dbReference type="EC" id="6.3.2.6" evidence="1"/>
<dbReference type="EMBL" id="CP000814">
    <property type="protein sequence ID" value="ABV52075.1"/>
    <property type="molecule type" value="Genomic_DNA"/>
</dbReference>
<dbReference type="RefSeq" id="WP_002854922.1">
    <property type="nucleotide sequence ID" value="NC_009839.1"/>
</dbReference>
<dbReference type="SMR" id="A8FKT8"/>
<dbReference type="KEGG" id="cju:C8J_0476"/>
<dbReference type="HOGENOM" id="CLU_061495_2_0_7"/>
<dbReference type="UniPathway" id="UPA00074">
    <property type="reaction ID" value="UER00131"/>
</dbReference>
<dbReference type="GO" id="GO:0005524">
    <property type="term" value="F:ATP binding"/>
    <property type="evidence" value="ECO:0007669"/>
    <property type="project" value="UniProtKB-KW"/>
</dbReference>
<dbReference type="GO" id="GO:0004639">
    <property type="term" value="F:phosphoribosylaminoimidazolesuccinocarboxamide synthase activity"/>
    <property type="evidence" value="ECO:0007669"/>
    <property type="project" value="UniProtKB-UniRule"/>
</dbReference>
<dbReference type="GO" id="GO:0006189">
    <property type="term" value="P:'de novo' IMP biosynthetic process"/>
    <property type="evidence" value="ECO:0007669"/>
    <property type="project" value="UniProtKB-UniRule"/>
</dbReference>
<dbReference type="GO" id="GO:0009236">
    <property type="term" value="P:cobalamin biosynthetic process"/>
    <property type="evidence" value="ECO:0007669"/>
    <property type="project" value="InterPro"/>
</dbReference>
<dbReference type="CDD" id="cd01415">
    <property type="entry name" value="SAICAR_synt_PurC"/>
    <property type="match status" value="1"/>
</dbReference>
<dbReference type="FunFam" id="3.30.470.20:FF:000006">
    <property type="entry name" value="Phosphoribosylaminoimidazole-succinocarboxamide synthase"/>
    <property type="match status" value="1"/>
</dbReference>
<dbReference type="Gene3D" id="3.30.470.20">
    <property type="entry name" value="ATP-grasp fold, B domain"/>
    <property type="match status" value="1"/>
</dbReference>
<dbReference type="Gene3D" id="3.30.200.20">
    <property type="entry name" value="Phosphorylase Kinase, domain 1"/>
    <property type="match status" value="1"/>
</dbReference>
<dbReference type="HAMAP" id="MF_00137">
    <property type="entry name" value="SAICAR_synth"/>
    <property type="match status" value="1"/>
</dbReference>
<dbReference type="InterPro" id="IPR028923">
    <property type="entry name" value="SAICAR_synt/ADE2_N"/>
</dbReference>
<dbReference type="InterPro" id="IPR033934">
    <property type="entry name" value="SAICAR_synt_PurC"/>
</dbReference>
<dbReference type="InterPro" id="IPR001636">
    <property type="entry name" value="SAICAR_synth"/>
</dbReference>
<dbReference type="InterPro" id="IPR050089">
    <property type="entry name" value="SAICAR_synthetase"/>
</dbReference>
<dbReference type="InterPro" id="IPR018236">
    <property type="entry name" value="SAICAR_synthetase_CS"/>
</dbReference>
<dbReference type="NCBIfam" id="TIGR00081">
    <property type="entry name" value="purC"/>
    <property type="match status" value="1"/>
</dbReference>
<dbReference type="PANTHER" id="PTHR43599">
    <property type="entry name" value="MULTIFUNCTIONAL PROTEIN ADE2"/>
    <property type="match status" value="1"/>
</dbReference>
<dbReference type="PANTHER" id="PTHR43599:SF3">
    <property type="entry name" value="SI:DKEY-6E2.2"/>
    <property type="match status" value="1"/>
</dbReference>
<dbReference type="Pfam" id="PF01259">
    <property type="entry name" value="SAICAR_synt"/>
    <property type="match status" value="1"/>
</dbReference>
<dbReference type="SUPFAM" id="SSF56104">
    <property type="entry name" value="SAICAR synthase-like"/>
    <property type="match status" value="1"/>
</dbReference>
<dbReference type="PROSITE" id="PS01057">
    <property type="entry name" value="SAICAR_SYNTHETASE_1"/>
    <property type="match status" value="1"/>
</dbReference>
<sequence>MTKKEMLYEGKGKKLFKTDDENLLISEFKDDLTAFNAEKRGNESGKGALNCKISTEIFHLLEKNGIKTHLVETISDTEQVVKKCKIVPIEVIVRNVATGSLTKRLGIKDGTVLPFALVEFCLKDDALGDPFINDEHCLILNLVQNEAQISEIKNMARKINSILTPFFDNKNLRLIDFKIELGLTKDNELVLADEISPDSCRFWDKFSNEKLDKDRFRQDLGNVKMAYEEVLKRILN</sequence>